<gene>
    <name evidence="1" type="primary">rlmH</name>
    <name type="ordered locus">SPP_2294</name>
</gene>
<comment type="function">
    <text evidence="1">Specifically methylates the pseudouridine at position 1915 (m3Psi1915) in 23S rRNA.</text>
</comment>
<comment type="catalytic activity">
    <reaction evidence="1">
        <text>pseudouridine(1915) in 23S rRNA + S-adenosyl-L-methionine = N(3)-methylpseudouridine(1915) in 23S rRNA + S-adenosyl-L-homocysteine + H(+)</text>
        <dbReference type="Rhea" id="RHEA:42752"/>
        <dbReference type="Rhea" id="RHEA-COMP:10221"/>
        <dbReference type="Rhea" id="RHEA-COMP:10222"/>
        <dbReference type="ChEBI" id="CHEBI:15378"/>
        <dbReference type="ChEBI" id="CHEBI:57856"/>
        <dbReference type="ChEBI" id="CHEBI:59789"/>
        <dbReference type="ChEBI" id="CHEBI:65314"/>
        <dbReference type="ChEBI" id="CHEBI:74486"/>
        <dbReference type="EC" id="2.1.1.177"/>
    </reaction>
</comment>
<comment type="subunit">
    <text evidence="1">Homodimer.</text>
</comment>
<comment type="subcellular location">
    <subcellularLocation>
        <location evidence="1">Cytoplasm</location>
    </subcellularLocation>
</comment>
<comment type="similarity">
    <text evidence="1">Belongs to the RNA methyltransferase RlmH family.</text>
</comment>
<feature type="chain" id="PRO_1000199834" description="Ribosomal RNA large subunit methyltransferase H">
    <location>
        <begin position="1"/>
        <end position="159"/>
    </location>
</feature>
<feature type="binding site" evidence="1">
    <location>
        <position position="76"/>
    </location>
    <ligand>
        <name>S-adenosyl-L-methionine</name>
        <dbReference type="ChEBI" id="CHEBI:59789"/>
    </ligand>
</feature>
<feature type="binding site" evidence="1">
    <location>
        <position position="108"/>
    </location>
    <ligand>
        <name>S-adenosyl-L-methionine</name>
        <dbReference type="ChEBI" id="CHEBI:59789"/>
    </ligand>
</feature>
<feature type="binding site" evidence="1">
    <location>
        <begin position="127"/>
        <end position="132"/>
    </location>
    <ligand>
        <name>S-adenosyl-L-methionine</name>
        <dbReference type="ChEBI" id="CHEBI:59789"/>
    </ligand>
</feature>
<keyword id="KW-0963">Cytoplasm</keyword>
<keyword id="KW-0489">Methyltransferase</keyword>
<keyword id="KW-0698">rRNA processing</keyword>
<keyword id="KW-0949">S-adenosyl-L-methionine</keyword>
<keyword id="KW-0808">Transferase</keyword>
<name>RLMH_STRZP</name>
<organism>
    <name type="scientific">Streptococcus pneumoniae (strain P1031)</name>
    <dbReference type="NCBI Taxonomy" id="488223"/>
    <lineage>
        <taxon>Bacteria</taxon>
        <taxon>Bacillati</taxon>
        <taxon>Bacillota</taxon>
        <taxon>Bacilli</taxon>
        <taxon>Lactobacillales</taxon>
        <taxon>Streptococcaceae</taxon>
        <taxon>Streptococcus</taxon>
    </lineage>
</organism>
<reference key="1">
    <citation type="journal article" date="2010" name="Genome Biol.">
        <title>Structure and dynamics of the pan-genome of Streptococcus pneumoniae and closely related species.</title>
        <authorList>
            <person name="Donati C."/>
            <person name="Hiller N.L."/>
            <person name="Tettelin H."/>
            <person name="Muzzi A."/>
            <person name="Croucher N.J."/>
            <person name="Angiuoli S.V."/>
            <person name="Oggioni M."/>
            <person name="Dunning Hotopp J.C."/>
            <person name="Hu F.Z."/>
            <person name="Riley D.R."/>
            <person name="Covacci A."/>
            <person name="Mitchell T.J."/>
            <person name="Bentley S.D."/>
            <person name="Kilian M."/>
            <person name="Ehrlich G.D."/>
            <person name="Rappuoli R."/>
            <person name="Moxon E.R."/>
            <person name="Masignani V."/>
        </authorList>
    </citation>
    <scope>NUCLEOTIDE SEQUENCE [LARGE SCALE GENOMIC DNA]</scope>
    <source>
        <strain>P1031</strain>
    </source>
</reference>
<evidence type="ECO:0000255" key="1">
    <source>
        <dbReference type="HAMAP-Rule" id="MF_00658"/>
    </source>
</evidence>
<protein>
    <recommendedName>
        <fullName evidence="1">Ribosomal RNA large subunit methyltransferase H</fullName>
        <ecNumber evidence="1">2.1.1.177</ecNumber>
    </recommendedName>
    <alternativeName>
        <fullName evidence="1">23S rRNA (pseudouridine1915-N3)-methyltransferase</fullName>
    </alternativeName>
    <alternativeName>
        <fullName evidence="1">23S rRNA m3Psi1915 methyltransferase</fullName>
    </alternativeName>
    <alternativeName>
        <fullName evidence="1">rRNA (pseudouridine-N3-)-methyltransferase RlmH</fullName>
    </alternativeName>
</protein>
<proteinExistence type="inferred from homology"/>
<accession>C1CNL1</accession>
<sequence>MKIKVVTVGKLKEKYLKDGIAEYSKRISRFAKFEMIELSDEKTPDKASESENQKILEIEGQRILSKIADRDFVIVLAIEGKTFFSEEFSKQLEETSIKGFSTLTFIIGGSLGLSSSVKNRANLSVSFGRLTLPHQLMRLVLVEQIYRAFTIQQGFPYHK</sequence>
<dbReference type="EC" id="2.1.1.177" evidence="1"/>
<dbReference type="EMBL" id="CP000920">
    <property type="protein sequence ID" value="ACO21881.1"/>
    <property type="molecule type" value="Genomic_DNA"/>
</dbReference>
<dbReference type="RefSeq" id="WP_000695929.1">
    <property type="nucleotide sequence ID" value="NC_012467.1"/>
</dbReference>
<dbReference type="SMR" id="C1CNL1"/>
<dbReference type="GeneID" id="45652538"/>
<dbReference type="KEGG" id="spp:SPP_2294"/>
<dbReference type="HOGENOM" id="CLU_100552_0_0_9"/>
<dbReference type="GO" id="GO:0005737">
    <property type="term" value="C:cytoplasm"/>
    <property type="evidence" value="ECO:0007669"/>
    <property type="project" value="UniProtKB-SubCell"/>
</dbReference>
<dbReference type="GO" id="GO:0070038">
    <property type="term" value="F:rRNA (pseudouridine-N3-)-methyltransferase activity"/>
    <property type="evidence" value="ECO:0007669"/>
    <property type="project" value="UniProtKB-UniRule"/>
</dbReference>
<dbReference type="CDD" id="cd18081">
    <property type="entry name" value="RlmH-like"/>
    <property type="match status" value="1"/>
</dbReference>
<dbReference type="Gene3D" id="3.40.1280.10">
    <property type="match status" value="1"/>
</dbReference>
<dbReference type="HAMAP" id="MF_00658">
    <property type="entry name" value="23SrRNA_methyltr_H"/>
    <property type="match status" value="1"/>
</dbReference>
<dbReference type="InterPro" id="IPR029028">
    <property type="entry name" value="Alpha/beta_knot_MTases"/>
</dbReference>
<dbReference type="InterPro" id="IPR003742">
    <property type="entry name" value="RlmH-like"/>
</dbReference>
<dbReference type="InterPro" id="IPR029026">
    <property type="entry name" value="tRNA_m1G_MTases_N"/>
</dbReference>
<dbReference type="NCBIfam" id="NF000985">
    <property type="entry name" value="PRK00103.1-3"/>
    <property type="match status" value="1"/>
</dbReference>
<dbReference type="NCBIfam" id="TIGR00246">
    <property type="entry name" value="tRNA_RlmH_YbeA"/>
    <property type="match status" value="1"/>
</dbReference>
<dbReference type="PANTHER" id="PTHR33603">
    <property type="entry name" value="METHYLTRANSFERASE"/>
    <property type="match status" value="1"/>
</dbReference>
<dbReference type="PANTHER" id="PTHR33603:SF1">
    <property type="entry name" value="RIBOSOMAL RNA LARGE SUBUNIT METHYLTRANSFERASE H"/>
    <property type="match status" value="1"/>
</dbReference>
<dbReference type="Pfam" id="PF02590">
    <property type="entry name" value="SPOUT_MTase"/>
    <property type="match status" value="1"/>
</dbReference>
<dbReference type="PIRSF" id="PIRSF004505">
    <property type="entry name" value="MT_bac"/>
    <property type="match status" value="1"/>
</dbReference>
<dbReference type="SUPFAM" id="SSF75217">
    <property type="entry name" value="alpha/beta knot"/>
    <property type="match status" value="1"/>
</dbReference>